<protein>
    <recommendedName>
        <fullName evidence="1">Thymidylate synthase</fullName>
        <shortName evidence="1">TS</shortName>
        <shortName evidence="1">TSase</shortName>
        <ecNumber evidence="1">2.1.1.45</ecNumber>
    </recommendedName>
</protein>
<organism>
    <name type="scientific">Bordetella bronchiseptica (strain ATCC BAA-588 / NCTC 13252 / RB50)</name>
    <name type="common">Alcaligenes bronchisepticus</name>
    <dbReference type="NCBI Taxonomy" id="257310"/>
    <lineage>
        <taxon>Bacteria</taxon>
        <taxon>Pseudomonadati</taxon>
        <taxon>Pseudomonadota</taxon>
        <taxon>Betaproteobacteria</taxon>
        <taxon>Burkholderiales</taxon>
        <taxon>Alcaligenaceae</taxon>
        <taxon>Bordetella</taxon>
    </lineage>
</organism>
<name>TYSY_BORBR</name>
<evidence type="ECO:0000255" key="1">
    <source>
        <dbReference type="HAMAP-Rule" id="MF_00008"/>
    </source>
</evidence>
<reference key="1">
    <citation type="journal article" date="2003" name="Nat. Genet.">
        <title>Comparative analysis of the genome sequences of Bordetella pertussis, Bordetella parapertussis and Bordetella bronchiseptica.</title>
        <authorList>
            <person name="Parkhill J."/>
            <person name="Sebaihia M."/>
            <person name="Preston A."/>
            <person name="Murphy L.D."/>
            <person name="Thomson N.R."/>
            <person name="Harris D.E."/>
            <person name="Holden M.T.G."/>
            <person name="Churcher C.M."/>
            <person name="Bentley S.D."/>
            <person name="Mungall K.L."/>
            <person name="Cerdeno-Tarraga A.-M."/>
            <person name="Temple L."/>
            <person name="James K.D."/>
            <person name="Harris B."/>
            <person name="Quail M.A."/>
            <person name="Achtman M."/>
            <person name="Atkin R."/>
            <person name="Baker S."/>
            <person name="Basham D."/>
            <person name="Bason N."/>
            <person name="Cherevach I."/>
            <person name="Chillingworth T."/>
            <person name="Collins M."/>
            <person name="Cronin A."/>
            <person name="Davis P."/>
            <person name="Doggett J."/>
            <person name="Feltwell T."/>
            <person name="Goble A."/>
            <person name="Hamlin N."/>
            <person name="Hauser H."/>
            <person name="Holroyd S."/>
            <person name="Jagels K."/>
            <person name="Leather S."/>
            <person name="Moule S."/>
            <person name="Norberczak H."/>
            <person name="O'Neil S."/>
            <person name="Ormond D."/>
            <person name="Price C."/>
            <person name="Rabbinowitsch E."/>
            <person name="Rutter S."/>
            <person name="Sanders M."/>
            <person name="Saunders D."/>
            <person name="Seeger K."/>
            <person name="Sharp S."/>
            <person name="Simmonds M."/>
            <person name="Skelton J."/>
            <person name="Squares R."/>
            <person name="Squares S."/>
            <person name="Stevens K."/>
            <person name="Unwin L."/>
            <person name="Whitehead S."/>
            <person name="Barrell B.G."/>
            <person name="Maskell D.J."/>
        </authorList>
    </citation>
    <scope>NUCLEOTIDE SEQUENCE [LARGE SCALE GENOMIC DNA]</scope>
    <source>
        <strain>ATCC BAA-588 / NCTC 13252 / RB50</strain>
    </source>
</reference>
<accession>Q7WP13</accession>
<proteinExistence type="inferred from homology"/>
<keyword id="KW-0963">Cytoplasm</keyword>
<keyword id="KW-0489">Methyltransferase</keyword>
<keyword id="KW-0545">Nucleotide biosynthesis</keyword>
<keyword id="KW-0808">Transferase</keyword>
<comment type="function">
    <text evidence="1">Catalyzes the reductive methylation of 2'-deoxyuridine-5'-monophosphate (dUMP) to 2'-deoxythymidine-5'-monophosphate (dTMP) while utilizing 5,10-methylenetetrahydrofolate (mTHF) as the methyl donor and reductant in the reaction, yielding dihydrofolate (DHF) as a by-product. This enzymatic reaction provides an intracellular de novo source of dTMP, an essential precursor for DNA biosynthesis.</text>
</comment>
<comment type="catalytic activity">
    <reaction evidence="1">
        <text>dUMP + (6R)-5,10-methylene-5,6,7,8-tetrahydrofolate = 7,8-dihydrofolate + dTMP</text>
        <dbReference type="Rhea" id="RHEA:12104"/>
        <dbReference type="ChEBI" id="CHEBI:15636"/>
        <dbReference type="ChEBI" id="CHEBI:57451"/>
        <dbReference type="ChEBI" id="CHEBI:63528"/>
        <dbReference type="ChEBI" id="CHEBI:246422"/>
        <dbReference type="EC" id="2.1.1.45"/>
    </reaction>
</comment>
<comment type="pathway">
    <text evidence="1">Pyrimidine metabolism; dTTP biosynthesis.</text>
</comment>
<comment type="subunit">
    <text evidence="1">Homodimer.</text>
</comment>
<comment type="subcellular location">
    <subcellularLocation>
        <location evidence="1">Cytoplasm</location>
    </subcellularLocation>
</comment>
<comment type="similarity">
    <text evidence="1">Belongs to the thymidylate synthase family. Bacterial-type ThyA subfamily.</text>
</comment>
<gene>
    <name evidence="1" type="primary">thyA</name>
    <name type="ordered locus">BB0872</name>
</gene>
<feature type="chain" id="PRO_0000140938" description="Thymidylate synthase">
    <location>
        <begin position="1"/>
        <end position="323"/>
    </location>
</feature>
<feature type="active site" description="Nucleophile" evidence="1">
    <location>
        <position position="192"/>
    </location>
</feature>
<feature type="binding site" description="in other chain" evidence="1">
    <location>
        <position position="21"/>
    </location>
    <ligand>
        <name>dUMP</name>
        <dbReference type="ChEBI" id="CHEBI:246422"/>
        <note>ligand shared between dimeric partners</note>
    </ligand>
</feature>
<feature type="binding site" evidence="1">
    <location>
        <begin position="172"/>
        <end position="173"/>
    </location>
    <ligand>
        <name>dUMP</name>
        <dbReference type="ChEBI" id="CHEBI:246422"/>
        <note>ligand shared between dimeric partners</note>
    </ligand>
</feature>
<feature type="binding site" description="in other chain" evidence="1">
    <location>
        <begin position="214"/>
        <end position="217"/>
    </location>
    <ligand>
        <name>dUMP</name>
        <dbReference type="ChEBI" id="CHEBI:246422"/>
        <note>ligand shared between dimeric partners</note>
    </ligand>
</feature>
<feature type="binding site" evidence="1">
    <location>
        <position position="217"/>
    </location>
    <ligand>
        <name>(6R)-5,10-methylene-5,6,7,8-tetrahydrofolate</name>
        <dbReference type="ChEBI" id="CHEBI:15636"/>
    </ligand>
</feature>
<feature type="binding site" description="in other chain" evidence="1">
    <location>
        <position position="225"/>
    </location>
    <ligand>
        <name>dUMP</name>
        <dbReference type="ChEBI" id="CHEBI:246422"/>
        <note>ligand shared between dimeric partners</note>
    </ligand>
</feature>
<feature type="binding site" description="in other chain" evidence="1">
    <location>
        <begin position="255"/>
        <end position="257"/>
    </location>
    <ligand>
        <name>dUMP</name>
        <dbReference type="ChEBI" id="CHEBI:246422"/>
        <note>ligand shared between dimeric partners</note>
    </ligand>
</feature>
<feature type="binding site" evidence="1">
    <location>
        <position position="322"/>
    </location>
    <ligand>
        <name>(6R)-5,10-methylene-5,6,7,8-tetrahydrofolate</name>
        <dbReference type="ChEBI" id="CHEBI:15636"/>
    </ligand>
</feature>
<sequence length="323" mass="36406">MKQYLDLVQSILDQGAWQENRTGVRTLSLPGAALRFDLQQGFPAVTTKKLAFKSAIGEMVGFLRATRSAAQFRALGCKVWDQNANENEQWLANPYREGPDDLGPVYGVQWRHWPAYKLLPRSAGGQVADALARGYRQVAEVAENGAPHVLLYKAVDQLRQCLDTIHQSPGDRRILFHGWNWAQIEEMALPPCHLLYQFLPNAGTREISLCLYIRSNDVGLGTPFNLTEGAALLHLVGRLTGYKPRWFSYFIGDAHVYENHLPMLREQLTREPYPAPQLVLSDRIPDFAVTGKYEPQWLEQVEPGDFTLSGYQHHAPLTAPMAV</sequence>
<dbReference type="EC" id="2.1.1.45" evidence="1"/>
<dbReference type="EMBL" id="BX640439">
    <property type="protein sequence ID" value="CAE31371.1"/>
    <property type="molecule type" value="Genomic_DNA"/>
</dbReference>
<dbReference type="RefSeq" id="WP_003808442.1">
    <property type="nucleotide sequence ID" value="NC_002927.3"/>
</dbReference>
<dbReference type="SMR" id="Q7WP13"/>
<dbReference type="KEGG" id="bbr:BB0872"/>
<dbReference type="eggNOG" id="COG0207">
    <property type="taxonomic scope" value="Bacteria"/>
</dbReference>
<dbReference type="HOGENOM" id="CLU_021669_0_1_4"/>
<dbReference type="UniPathway" id="UPA00575"/>
<dbReference type="Proteomes" id="UP000001027">
    <property type="component" value="Chromosome"/>
</dbReference>
<dbReference type="GO" id="GO:0005829">
    <property type="term" value="C:cytosol"/>
    <property type="evidence" value="ECO:0007669"/>
    <property type="project" value="TreeGrafter"/>
</dbReference>
<dbReference type="GO" id="GO:0004799">
    <property type="term" value="F:thymidylate synthase activity"/>
    <property type="evidence" value="ECO:0007669"/>
    <property type="project" value="UniProtKB-UniRule"/>
</dbReference>
<dbReference type="GO" id="GO:0006231">
    <property type="term" value="P:dTMP biosynthetic process"/>
    <property type="evidence" value="ECO:0007669"/>
    <property type="project" value="UniProtKB-UniRule"/>
</dbReference>
<dbReference type="GO" id="GO:0006235">
    <property type="term" value="P:dTTP biosynthetic process"/>
    <property type="evidence" value="ECO:0007669"/>
    <property type="project" value="UniProtKB-UniRule"/>
</dbReference>
<dbReference type="GO" id="GO:0032259">
    <property type="term" value="P:methylation"/>
    <property type="evidence" value="ECO:0007669"/>
    <property type="project" value="UniProtKB-KW"/>
</dbReference>
<dbReference type="CDD" id="cd00351">
    <property type="entry name" value="TS_Pyrimidine_HMase"/>
    <property type="match status" value="1"/>
</dbReference>
<dbReference type="Gene3D" id="3.30.572.10">
    <property type="entry name" value="Thymidylate synthase/dCMP hydroxymethylase domain"/>
    <property type="match status" value="1"/>
</dbReference>
<dbReference type="HAMAP" id="MF_00008">
    <property type="entry name" value="Thymidy_synth_bact"/>
    <property type="match status" value="1"/>
</dbReference>
<dbReference type="InterPro" id="IPR045097">
    <property type="entry name" value="Thymidate_synth/dCMP_Mease"/>
</dbReference>
<dbReference type="InterPro" id="IPR023451">
    <property type="entry name" value="Thymidate_synth/dCMP_Mease_dom"/>
</dbReference>
<dbReference type="InterPro" id="IPR036926">
    <property type="entry name" value="Thymidate_synth/dCMP_Mease_sf"/>
</dbReference>
<dbReference type="InterPro" id="IPR000398">
    <property type="entry name" value="Thymidylate_synthase"/>
</dbReference>
<dbReference type="InterPro" id="IPR020940">
    <property type="entry name" value="Thymidylate_synthase_AS"/>
</dbReference>
<dbReference type="NCBIfam" id="NF010393">
    <property type="entry name" value="PRK13821.1"/>
    <property type="match status" value="1"/>
</dbReference>
<dbReference type="NCBIfam" id="TIGR03284">
    <property type="entry name" value="thym_sym"/>
    <property type="match status" value="1"/>
</dbReference>
<dbReference type="PANTHER" id="PTHR11548:SF9">
    <property type="entry name" value="THYMIDYLATE SYNTHASE"/>
    <property type="match status" value="1"/>
</dbReference>
<dbReference type="PANTHER" id="PTHR11548">
    <property type="entry name" value="THYMIDYLATE SYNTHASE 1"/>
    <property type="match status" value="1"/>
</dbReference>
<dbReference type="Pfam" id="PF00303">
    <property type="entry name" value="Thymidylat_synt"/>
    <property type="match status" value="1"/>
</dbReference>
<dbReference type="PRINTS" id="PR00108">
    <property type="entry name" value="THYMDSNTHASE"/>
</dbReference>
<dbReference type="SUPFAM" id="SSF55831">
    <property type="entry name" value="Thymidylate synthase/dCMP hydroxymethylase"/>
    <property type="match status" value="1"/>
</dbReference>
<dbReference type="PROSITE" id="PS00091">
    <property type="entry name" value="THYMIDYLATE_SYNTHASE"/>
    <property type="match status" value="1"/>
</dbReference>